<accession>B5R0P4</accession>
<feature type="chain" id="PRO_1000138127" description="HTH-type transcriptional repressor NsrR">
    <location>
        <begin position="1"/>
        <end position="141"/>
    </location>
</feature>
<feature type="domain" description="HTH rrf2-type" evidence="1">
    <location>
        <begin position="2"/>
        <end position="129"/>
    </location>
</feature>
<feature type="DNA-binding region" description="H-T-H motif" evidence="1">
    <location>
        <begin position="28"/>
        <end position="51"/>
    </location>
</feature>
<feature type="binding site" evidence="1">
    <location>
        <position position="91"/>
    </location>
    <ligand>
        <name>[2Fe-2S] cluster</name>
        <dbReference type="ChEBI" id="CHEBI:190135"/>
    </ligand>
</feature>
<feature type="binding site" evidence="1">
    <location>
        <position position="96"/>
    </location>
    <ligand>
        <name>[2Fe-2S] cluster</name>
        <dbReference type="ChEBI" id="CHEBI:190135"/>
    </ligand>
</feature>
<feature type="binding site" evidence="1">
    <location>
        <position position="102"/>
    </location>
    <ligand>
        <name>[2Fe-2S] cluster</name>
        <dbReference type="ChEBI" id="CHEBI:190135"/>
    </ligand>
</feature>
<sequence>MQLTSFTDYGLRALIYMASLPDGRMTSISEVTEVYGVSRNHMVKIINQLSRAGFVTAVRGKNGGIRLGKPANTICIGDVVRELEPLSLVNCSSEFCHITPACRLKQALSKAVQSFLKELDNYTLADLVEENQPLYKLLLVE</sequence>
<organism>
    <name type="scientific">Salmonella enteritidis PT4 (strain P125109)</name>
    <dbReference type="NCBI Taxonomy" id="550537"/>
    <lineage>
        <taxon>Bacteria</taxon>
        <taxon>Pseudomonadati</taxon>
        <taxon>Pseudomonadota</taxon>
        <taxon>Gammaproteobacteria</taxon>
        <taxon>Enterobacterales</taxon>
        <taxon>Enterobacteriaceae</taxon>
        <taxon>Salmonella</taxon>
    </lineage>
</organism>
<dbReference type="EMBL" id="AM933172">
    <property type="protein sequence ID" value="CAR35693.1"/>
    <property type="molecule type" value="Genomic_DNA"/>
</dbReference>
<dbReference type="RefSeq" id="WP_001177632.1">
    <property type="nucleotide sequence ID" value="NC_011294.1"/>
</dbReference>
<dbReference type="SMR" id="B5R0P4"/>
<dbReference type="KEGG" id="set:SEN4133"/>
<dbReference type="HOGENOM" id="CLU_107144_2_1_6"/>
<dbReference type="Proteomes" id="UP000000613">
    <property type="component" value="Chromosome"/>
</dbReference>
<dbReference type="GO" id="GO:0005829">
    <property type="term" value="C:cytosol"/>
    <property type="evidence" value="ECO:0007669"/>
    <property type="project" value="TreeGrafter"/>
</dbReference>
<dbReference type="GO" id="GO:0051537">
    <property type="term" value="F:2 iron, 2 sulfur cluster binding"/>
    <property type="evidence" value="ECO:0007669"/>
    <property type="project" value="UniProtKB-KW"/>
</dbReference>
<dbReference type="GO" id="GO:0003700">
    <property type="term" value="F:DNA-binding transcription factor activity"/>
    <property type="evidence" value="ECO:0007669"/>
    <property type="project" value="UniProtKB-UniRule"/>
</dbReference>
<dbReference type="GO" id="GO:0003690">
    <property type="term" value="F:double-stranded DNA binding"/>
    <property type="evidence" value="ECO:0007669"/>
    <property type="project" value="UniProtKB-UniRule"/>
</dbReference>
<dbReference type="GO" id="GO:0005506">
    <property type="term" value="F:iron ion binding"/>
    <property type="evidence" value="ECO:0007669"/>
    <property type="project" value="UniProtKB-UniRule"/>
</dbReference>
<dbReference type="GO" id="GO:0045892">
    <property type="term" value="P:negative regulation of DNA-templated transcription"/>
    <property type="evidence" value="ECO:0007669"/>
    <property type="project" value="InterPro"/>
</dbReference>
<dbReference type="FunFam" id="1.10.10.10:FF:000105">
    <property type="entry name" value="HTH-type transcriptional repressor NsrR"/>
    <property type="match status" value="1"/>
</dbReference>
<dbReference type="Gene3D" id="1.10.10.10">
    <property type="entry name" value="Winged helix-like DNA-binding domain superfamily/Winged helix DNA-binding domain"/>
    <property type="match status" value="1"/>
</dbReference>
<dbReference type="HAMAP" id="MF_01177">
    <property type="entry name" value="HTH_type_NsrR"/>
    <property type="match status" value="1"/>
</dbReference>
<dbReference type="InterPro" id="IPR000944">
    <property type="entry name" value="Tscrpt_reg_Rrf2"/>
</dbReference>
<dbReference type="InterPro" id="IPR023761">
    <property type="entry name" value="Tscrpt_rep_HTH_NsrR"/>
</dbReference>
<dbReference type="InterPro" id="IPR036388">
    <property type="entry name" value="WH-like_DNA-bd_sf"/>
</dbReference>
<dbReference type="InterPro" id="IPR036390">
    <property type="entry name" value="WH_DNA-bd_sf"/>
</dbReference>
<dbReference type="NCBIfam" id="NF008240">
    <property type="entry name" value="PRK11014.1"/>
    <property type="match status" value="1"/>
</dbReference>
<dbReference type="NCBIfam" id="TIGR00738">
    <property type="entry name" value="rrf2_super"/>
    <property type="match status" value="1"/>
</dbReference>
<dbReference type="PANTHER" id="PTHR33221:SF4">
    <property type="entry name" value="HTH-TYPE TRANSCRIPTIONAL REPRESSOR NSRR"/>
    <property type="match status" value="1"/>
</dbReference>
<dbReference type="PANTHER" id="PTHR33221">
    <property type="entry name" value="WINGED HELIX-TURN-HELIX TRANSCRIPTIONAL REGULATOR, RRF2 FAMILY"/>
    <property type="match status" value="1"/>
</dbReference>
<dbReference type="Pfam" id="PF02082">
    <property type="entry name" value="Rrf2"/>
    <property type="match status" value="1"/>
</dbReference>
<dbReference type="SUPFAM" id="SSF46785">
    <property type="entry name" value="Winged helix' DNA-binding domain"/>
    <property type="match status" value="1"/>
</dbReference>
<dbReference type="PROSITE" id="PS51197">
    <property type="entry name" value="HTH_RRF2_2"/>
    <property type="match status" value="1"/>
</dbReference>
<reference key="1">
    <citation type="journal article" date="2008" name="Genome Res.">
        <title>Comparative genome analysis of Salmonella enteritidis PT4 and Salmonella gallinarum 287/91 provides insights into evolutionary and host adaptation pathways.</title>
        <authorList>
            <person name="Thomson N.R."/>
            <person name="Clayton D.J."/>
            <person name="Windhorst D."/>
            <person name="Vernikos G."/>
            <person name="Davidson S."/>
            <person name="Churcher C."/>
            <person name="Quail M.A."/>
            <person name="Stevens M."/>
            <person name="Jones M.A."/>
            <person name="Watson M."/>
            <person name="Barron A."/>
            <person name="Layton A."/>
            <person name="Pickard D."/>
            <person name="Kingsley R.A."/>
            <person name="Bignell A."/>
            <person name="Clark L."/>
            <person name="Harris B."/>
            <person name="Ormond D."/>
            <person name="Abdellah Z."/>
            <person name="Brooks K."/>
            <person name="Cherevach I."/>
            <person name="Chillingworth T."/>
            <person name="Woodward J."/>
            <person name="Norberczak H."/>
            <person name="Lord A."/>
            <person name="Arrowsmith C."/>
            <person name="Jagels K."/>
            <person name="Moule S."/>
            <person name="Mungall K."/>
            <person name="Saunders M."/>
            <person name="Whitehead S."/>
            <person name="Chabalgoity J.A."/>
            <person name="Maskell D."/>
            <person name="Humphreys T."/>
            <person name="Roberts M."/>
            <person name="Barrow P.A."/>
            <person name="Dougan G."/>
            <person name="Parkhill J."/>
        </authorList>
    </citation>
    <scope>NUCLEOTIDE SEQUENCE [LARGE SCALE GENOMIC DNA]</scope>
    <source>
        <strain>P125109</strain>
    </source>
</reference>
<protein>
    <recommendedName>
        <fullName evidence="1">HTH-type transcriptional repressor NsrR</fullName>
    </recommendedName>
</protein>
<name>NSRR_SALEP</name>
<proteinExistence type="inferred from homology"/>
<evidence type="ECO:0000255" key="1">
    <source>
        <dbReference type="HAMAP-Rule" id="MF_01177"/>
    </source>
</evidence>
<gene>
    <name evidence="1" type="primary">nsrR</name>
    <name type="ordered locus">SEN4133</name>
</gene>
<comment type="function">
    <text evidence="1">Nitric oxide-sensitive repressor of genes involved in protecting the cell against nitrosative stress. May require iron for activity.</text>
</comment>
<comment type="cofactor">
    <cofactor evidence="1">
        <name>[2Fe-2S] cluster</name>
        <dbReference type="ChEBI" id="CHEBI:190135"/>
    </cofactor>
    <text evidence="1">Binds 1 [2Fe-2S] cluster per subunit.</text>
</comment>
<keyword id="KW-0001">2Fe-2S</keyword>
<keyword id="KW-0238">DNA-binding</keyword>
<keyword id="KW-0408">Iron</keyword>
<keyword id="KW-0411">Iron-sulfur</keyword>
<keyword id="KW-0479">Metal-binding</keyword>
<keyword id="KW-0678">Repressor</keyword>
<keyword id="KW-0804">Transcription</keyword>
<keyword id="KW-0805">Transcription regulation</keyword>